<comment type="function">
    <text evidence="8">Zeins are major seed storage proteins.</text>
</comment>
<comment type="subcellular location">
    <subcellularLocation>
        <location evidence="3">Endoplasmic reticulum membrane</location>
    </subcellularLocation>
    <text evidence="3">The fl2 mutant remains anchored to endoplasmic reticulum membrane while the processed mature form localizes in the lumen.</text>
</comment>
<comment type="miscellaneous">
    <text evidence="8">The floury-2 (fl2) mutation is associated with the synthesis of a novel 24 kDa alpha-zein storage protein and an altered protein body morphology. The 24 kDa protein is expressed as a 22 kDa alpha-zein 16 with an uncleaved signal peptide, resulting in an enhanced Lys content of the grain and a soft texture of the endosperm.</text>
</comment>
<comment type="miscellaneous">
    <text evidence="1">Structurally, 22K and 19K zeins are composed of nine adjacent, topologically antiparallel helices clustered within a distorted cylinder.</text>
</comment>
<comment type="similarity">
    <text evidence="7">Belongs to the zein family.</text>
</comment>
<sequence length="262" mass="28430">MATKILALLALLALLVSATNAFIIPQCSLAPSAIIPQFLPPVTSMGFEHPAVQAYRLQLVLAASALQQPIAQLQQQSLAHLTLQTIATQQQQHFLPSLSHLAVVNPVAYLQQQLLASNPLALANVATYQQQQQLQQFMPALSQLAMVNPAVYLQLLSSSPLAVGNAPTYLQQQLLQQIVPALTHQLAMANPATYLQQLLPFNQLAVSNSAAYLQQRQQLLNPLAVANPLVATFLQQQQLLPYNQFSLMNPALQQPIVGGAIF</sequence>
<keyword id="KW-0903">Direct protein sequencing</keyword>
<keyword id="KW-0256">Endoplasmic reticulum</keyword>
<keyword id="KW-0472">Membrane</keyword>
<keyword id="KW-1185">Reference proteome</keyword>
<keyword id="KW-0708">Seed storage protein</keyword>
<keyword id="KW-0732">Signal</keyword>
<keyword id="KW-0758">Storage protein</keyword>
<reference key="1">
    <citation type="journal article" date="1995" name="Proc. Natl. Acad. Sci. U.S.A.">
        <title>A defective signal peptide in the maize high-lysine mutant floury 2.</title>
        <authorList>
            <person name="Coleman C.E."/>
            <person name="Lopes M.A."/>
            <person name="Gillikin J.W."/>
            <person name="Boston R.S."/>
            <person name="Larkins B.A."/>
        </authorList>
    </citation>
    <scope>NUCLEOTIDE SEQUENCE [GENOMIC DNA]</scope>
    <scope>PARTIAL PROTEIN SEQUENCE</scope>
    <source>
        <strain>cv. Wisconsin 64A</strain>
        <tissue>Leaf</tissue>
    </source>
</reference>
<reference key="2">
    <citation type="submission" date="2007-08" db="EMBL/GenBank/DDBJ databases">
        <title>Expressional profiling of maize-zein super gene family during endosperm development.</title>
        <authorList>
            <person name="Feng L."/>
            <person name="Zhu J."/>
            <person name="Wang G."/>
            <person name="Xu Z."/>
            <person name="Song R."/>
        </authorList>
    </citation>
    <scope>NUCLEOTIDE SEQUENCE [MRNA] OF 38-259</scope>
</reference>
<reference key="3">
    <citation type="journal article" date="1997" name="Plant Physiol.">
        <title>A defective signal peptide tethers the floury-2 zein to the endoplasmic reticulum membrane.</title>
        <authorList>
            <person name="Gillikin J.W."/>
            <person name="Zhang F."/>
            <person name="Coleman C.E."/>
            <person name="Bass H.W."/>
            <person name="Larkins B.A."/>
            <person name="Boston R.S."/>
        </authorList>
    </citation>
    <scope>MUTAGENESIS OF ALA-21</scope>
    <scope>SUBCELLULAR LOCATION</scope>
</reference>
<reference key="4">
    <citation type="journal article" date="2001" name="Genome Res.">
        <title>Sequence, regulation, and evolution of the maize 22-kD alpha zein gene family.</title>
        <authorList>
            <person name="Song R."/>
            <person name="Llaca V."/>
            <person name="Linton E."/>
            <person name="Messing J."/>
        </authorList>
    </citation>
    <scope>GENE FAMILY</scope>
    <scope>NOMENCLATURE</scope>
</reference>
<gene>
    <name evidence="4" type="primary">AZS22-16</name>
    <name evidence="5" type="synonym">FL2</name>
</gene>
<dbReference type="EMBL" id="L34340">
    <property type="protein sequence ID" value="AAA76580.1"/>
    <property type="molecule type" value="Genomic_DNA"/>
</dbReference>
<dbReference type="EMBL" id="EU116495">
    <property type="protein sequence ID" value="ABV71977.1"/>
    <property type="molecule type" value="mRNA"/>
</dbReference>
<dbReference type="PIR" id="T04386">
    <property type="entry name" value="T04386"/>
</dbReference>
<dbReference type="STRING" id="4577.Q41896"/>
<dbReference type="InParanoid" id="Q41896"/>
<dbReference type="Proteomes" id="UP000007305">
    <property type="component" value="Unplaced"/>
</dbReference>
<dbReference type="ExpressionAtlas" id="Q41896">
    <property type="expression patterns" value="baseline and differential"/>
</dbReference>
<dbReference type="GO" id="GO:0005789">
    <property type="term" value="C:endoplasmic reticulum membrane"/>
    <property type="evidence" value="ECO:0007669"/>
    <property type="project" value="UniProtKB-SubCell"/>
</dbReference>
<dbReference type="GO" id="GO:0045735">
    <property type="term" value="F:nutrient reservoir activity"/>
    <property type="evidence" value="ECO:0007669"/>
    <property type="project" value="UniProtKB-KW"/>
</dbReference>
<dbReference type="InterPro" id="IPR051529">
    <property type="entry name" value="Seed_Storage_Prolamin"/>
</dbReference>
<dbReference type="InterPro" id="IPR002530">
    <property type="entry name" value="Zein"/>
</dbReference>
<dbReference type="PANTHER" id="PTHR48199">
    <property type="entry name" value="ALPHA KAFIRIN"/>
    <property type="match status" value="1"/>
</dbReference>
<dbReference type="PANTHER" id="PTHR48199:SF1">
    <property type="entry name" value="ALPHA KAFIRIN"/>
    <property type="match status" value="1"/>
</dbReference>
<dbReference type="Pfam" id="PF01559">
    <property type="entry name" value="Zein"/>
    <property type="match status" value="1"/>
</dbReference>
<proteinExistence type="evidence at protein level"/>
<name>FL2W_MAIZE</name>
<feature type="signal peptide" evidence="2">
    <location>
        <begin position="1"/>
        <end position="21"/>
    </location>
</feature>
<feature type="chain" id="PRO_5004231717" description="Protein FLOURY 2" evidence="2">
    <location>
        <begin position="22"/>
        <end position="262"/>
    </location>
</feature>
<feature type="mutagenesis site" description="In fl2; loss of processing of the signal peptide and floury phenotype." evidence="3">
    <original>A</original>
    <variation>V</variation>
    <location>
        <position position="21"/>
    </location>
</feature>
<organism evidence="9">
    <name type="scientific">Zea mays</name>
    <name type="common">Maize</name>
    <dbReference type="NCBI Taxonomy" id="4577"/>
    <lineage>
        <taxon>Eukaryota</taxon>
        <taxon>Viridiplantae</taxon>
        <taxon>Streptophyta</taxon>
        <taxon>Embryophyta</taxon>
        <taxon>Tracheophyta</taxon>
        <taxon>Spermatophyta</taxon>
        <taxon>Magnoliopsida</taxon>
        <taxon>Liliopsida</taxon>
        <taxon>Poales</taxon>
        <taxon>Poaceae</taxon>
        <taxon>PACMAD clade</taxon>
        <taxon>Panicoideae</taxon>
        <taxon>Andropogonodae</taxon>
        <taxon>Andropogoneae</taxon>
        <taxon>Tripsacinae</taxon>
        <taxon>Zea</taxon>
    </lineage>
</organism>
<accession>Q41896</accession>
<accession>A8HNM6</accession>
<protein>
    <recommendedName>
        <fullName evidence="5">Protein FLOURY 2</fullName>
    </recommendedName>
    <alternativeName>
        <fullName evidence="4">22 kDa alpha-zein 16</fullName>
    </alternativeName>
    <alternativeName>
        <fullName evidence="6">FLOURY-2</fullName>
    </alternativeName>
</protein>
<evidence type="ECO:0000250" key="1">
    <source>
        <dbReference type="UniProtKB" id="P04698"/>
    </source>
</evidence>
<evidence type="ECO:0000255" key="2"/>
<evidence type="ECO:0000269" key="3">
    <source>
    </source>
</evidence>
<evidence type="ECO:0000303" key="4">
    <source>
    </source>
</evidence>
<evidence type="ECO:0000303" key="5">
    <source>
    </source>
</evidence>
<evidence type="ECO:0000303" key="6">
    <source>
    </source>
</evidence>
<evidence type="ECO:0000305" key="7"/>
<evidence type="ECO:0000305" key="8">
    <source>
    </source>
</evidence>
<evidence type="ECO:0000312" key="9">
    <source>
        <dbReference type="EMBL" id="AAA76580.1"/>
    </source>
</evidence>